<dbReference type="EC" id="1.1.1.86" evidence="1"/>
<dbReference type="EMBL" id="CP000084">
    <property type="protein sequence ID" value="AAZ20826.1"/>
    <property type="molecule type" value="Genomic_DNA"/>
</dbReference>
<dbReference type="SMR" id="Q4FPQ6"/>
<dbReference type="STRING" id="335992.SAR11_0001"/>
<dbReference type="KEGG" id="pub:SAR11_0001"/>
<dbReference type="eggNOG" id="COG0059">
    <property type="taxonomic scope" value="Bacteria"/>
</dbReference>
<dbReference type="HOGENOM" id="CLU_033821_0_1_5"/>
<dbReference type="UniPathway" id="UPA00047">
    <property type="reaction ID" value="UER00056"/>
</dbReference>
<dbReference type="UniPathway" id="UPA00049">
    <property type="reaction ID" value="UER00060"/>
</dbReference>
<dbReference type="Proteomes" id="UP000002528">
    <property type="component" value="Chromosome"/>
</dbReference>
<dbReference type="GO" id="GO:0005829">
    <property type="term" value="C:cytosol"/>
    <property type="evidence" value="ECO:0007669"/>
    <property type="project" value="TreeGrafter"/>
</dbReference>
<dbReference type="GO" id="GO:0004455">
    <property type="term" value="F:ketol-acid reductoisomerase activity"/>
    <property type="evidence" value="ECO:0007669"/>
    <property type="project" value="UniProtKB-UniRule"/>
</dbReference>
<dbReference type="GO" id="GO:0000287">
    <property type="term" value="F:magnesium ion binding"/>
    <property type="evidence" value="ECO:0007669"/>
    <property type="project" value="UniProtKB-UniRule"/>
</dbReference>
<dbReference type="GO" id="GO:0050661">
    <property type="term" value="F:NADP binding"/>
    <property type="evidence" value="ECO:0007669"/>
    <property type="project" value="InterPro"/>
</dbReference>
<dbReference type="GO" id="GO:0009097">
    <property type="term" value="P:isoleucine biosynthetic process"/>
    <property type="evidence" value="ECO:0007669"/>
    <property type="project" value="UniProtKB-UniRule"/>
</dbReference>
<dbReference type="GO" id="GO:0009099">
    <property type="term" value="P:L-valine biosynthetic process"/>
    <property type="evidence" value="ECO:0007669"/>
    <property type="project" value="UniProtKB-UniRule"/>
</dbReference>
<dbReference type="FunFam" id="3.40.50.720:FF:000023">
    <property type="entry name" value="Ketol-acid reductoisomerase (NADP(+))"/>
    <property type="match status" value="1"/>
</dbReference>
<dbReference type="Gene3D" id="6.10.240.10">
    <property type="match status" value="1"/>
</dbReference>
<dbReference type="Gene3D" id="3.40.50.720">
    <property type="entry name" value="NAD(P)-binding Rossmann-like Domain"/>
    <property type="match status" value="1"/>
</dbReference>
<dbReference type="HAMAP" id="MF_00435">
    <property type="entry name" value="IlvC"/>
    <property type="match status" value="1"/>
</dbReference>
<dbReference type="InterPro" id="IPR008927">
    <property type="entry name" value="6-PGluconate_DH-like_C_sf"/>
</dbReference>
<dbReference type="InterPro" id="IPR013023">
    <property type="entry name" value="KARI"/>
</dbReference>
<dbReference type="InterPro" id="IPR000506">
    <property type="entry name" value="KARI_C"/>
</dbReference>
<dbReference type="InterPro" id="IPR013116">
    <property type="entry name" value="KARI_N"/>
</dbReference>
<dbReference type="InterPro" id="IPR014359">
    <property type="entry name" value="KARI_prok"/>
</dbReference>
<dbReference type="InterPro" id="IPR036291">
    <property type="entry name" value="NAD(P)-bd_dom_sf"/>
</dbReference>
<dbReference type="NCBIfam" id="TIGR00465">
    <property type="entry name" value="ilvC"/>
    <property type="match status" value="1"/>
</dbReference>
<dbReference type="NCBIfam" id="NF004017">
    <property type="entry name" value="PRK05479.1"/>
    <property type="match status" value="1"/>
</dbReference>
<dbReference type="NCBIfam" id="NF009940">
    <property type="entry name" value="PRK13403.1"/>
    <property type="match status" value="1"/>
</dbReference>
<dbReference type="PANTHER" id="PTHR21371">
    <property type="entry name" value="KETOL-ACID REDUCTOISOMERASE, MITOCHONDRIAL"/>
    <property type="match status" value="1"/>
</dbReference>
<dbReference type="PANTHER" id="PTHR21371:SF1">
    <property type="entry name" value="KETOL-ACID REDUCTOISOMERASE, MITOCHONDRIAL"/>
    <property type="match status" value="1"/>
</dbReference>
<dbReference type="Pfam" id="PF01450">
    <property type="entry name" value="KARI_C"/>
    <property type="match status" value="1"/>
</dbReference>
<dbReference type="Pfam" id="PF07991">
    <property type="entry name" value="KARI_N"/>
    <property type="match status" value="1"/>
</dbReference>
<dbReference type="PIRSF" id="PIRSF000116">
    <property type="entry name" value="IlvC_gammaproteo"/>
    <property type="match status" value="1"/>
</dbReference>
<dbReference type="SUPFAM" id="SSF48179">
    <property type="entry name" value="6-phosphogluconate dehydrogenase C-terminal domain-like"/>
    <property type="match status" value="1"/>
</dbReference>
<dbReference type="SUPFAM" id="SSF51735">
    <property type="entry name" value="NAD(P)-binding Rossmann-fold domains"/>
    <property type="match status" value="1"/>
</dbReference>
<dbReference type="PROSITE" id="PS51851">
    <property type="entry name" value="KARI_C"/>
    <property type="match status" value="1"/>
</dbReference>
<dbReference type="PROSITE" id="PS51850">
    <property type="entry name" value="KARI_N"/>
    <property type="match status" value="1"/>
</dbReference>
<proteinExistence type="inferred from homology"/>
<protein>
    <recommendedName>
        <fullName evidence="1">Ketol-acid reductoisomerase (NADP(+))</fullName>
        <shortName evidence="1">KARI</shortName>
        <ecNumber evidence="1">1.1.1.86</ecNumber>
    </recommendedName>
    <alternativeName>
        <fullName evidence="1">Acetohydroxy-acid isomeroreductase</fullName>
        <shortName evidence="1">AHIR</shortName>
    </alternativeName>
    <alternativeName>
        <fullName evidence="1">Alpha-keto-beta-hydroxylacyl reductoisomerase</fullName>
    </alternativeName>
    <alternativeName>
        <fullName evidence="1">Ketol-acid reductoisomerase type 1</fullName>
    </alternativeName>
    <alternativeName>
        <fullName evidence="1">Ketol-acid reductoisomerase type I</fullName>
    </alternativeName>
</protein>
<reference key="1">
    <citation type="journal article" date="2005" name="Science">
        <title>Genome streamlining in a cosmopolitan oceanic bacterium.</title>
        <authorList>
            <person name="Giovannoni S.J."/>
            <person name="Tripp H.J."/>
            <person name="Givan S."/>
            <person name="Podar M."/>
            <person name="Vergin K.L."/>
            <person name="Baptista D."/>
            <person name="Bibbs L."/>
            <person name="Eads J."/>
            <person name="Richardson T.H."/>
            <person name="Noordewier M."/>
            <person name="Rappe M.S."/>
            <person name="Short J.M."/>
            <person name="Carrington J.C."/>
            <person name="Mathur E.J."/>
        </authorList>
    </citation>
    <scope>NUCLEOTIDE SEQUENCE [LARGE SCALE GENOMIC DNA]</scope>
    <source>
        <strain>HTCC1062</strain>
    </source>
</reference>
<keyword id="KW-0028">Amino-acid biosynthesis</keyword>
<keyword id="KW-0100">Branched-chain amino acid biosynthesis</keyword>
<keyword id="KW-0460">Magnesium</keyword>
<keyword id="KW-0479">Metal-binding</keyword>
<keyword id="KW-0521">NADP</keyword>
<keyword id="KW-0560">Oxidoreductase</keyword>
<keyword id="KW-1185">Reference proteome</keyword>
<accession>Q4FPQ6</accession>
<name>ILVC_PELUB</name>
<organism>
    <name type="scientific">Pelagibacter ubique (strain HTCC1062)</name>
    <dbReference type="NCBI Taxonomy" id="335992"/>
    <lineage>
        <taxon>Bacteria</taxon>
        <taxon>Pseudomonadati</taxon>
        <taxon>Pseudomonadota</taxon>
        <taxon>Alphaproteobacteria</taxon>
        <taxon>Candidatus Pelagibacterales</taxon>
        <taxon>Candidatus Pelagibacteraceae</taxon>
        <taxon>Candidatus Pelagibacter</taxon>
    </lineage>
</organism>
<sequence>MFYEKDADVDLIKSKKIAIFGYGSQGHAHALNLKDSGAKEVVVALRDGSASKAKAESKGLRVMNMSDAAEWAEVAMILTPDELQASIYKNHIEQRIKQGTSLAFAHGLNIHYKLIDARKDLDVFMVAPKGPGHLVRSEFERGGGVPCLFAVHQDGTGKARDLALSYASAIGGGKSGIIETTFKDECETDLFGEQSVLCGGLVELIKNGFETLTEAGYEPEMAYFECLHEVKLIVDLIYEGGIANMNYSISNTAEYGEYVSGKKVVDSESKKRMKEVLADIQSGKFTKDWMKECEGGQKNFLKMRKDLADHPIEKVGAELRAMMPWIGKKKLIDSDKS</sequence>
<comment type="function">
    <text evidence="1">Involved in the biosynthesis of branched-chain amino acids (BCAA). Catalyzes an alkyl-migration followed by a ketol-acid reduction of (S)-2-acetolactate (S2AL) to yield (R)-2,3-dihydroxy-isovalerate. In the isomerase reaction, S2AL is rearranged via a Mg-dependent methyl migration to produce 3-hydroxy-3-methyl-2-ketobutyrate (HMKB). In the reductase reaction, this 2-ketoacid undergoes a metal-dependent reduction by NADPH to yield (R)-2,3-dihydroxy-isovalerate.</text>
</comment>
<comment type="catalytic activity">
    <reaction evidence="1">
        <text>(2R)-2,3-dihydroxy-3-methylbutanoate + NADP(+) = (2S)-2-acetolactate + NADPH + H(+)</text>
        <dbReference type="Rhea" id="RHEA:22068"/>
        <dbReference type="ChEBI" id="CHEBI:15378"/>
        <dbReference type="ChEBI" id="CHEBI:49072"/>
        <dbReference type="ChEBI" id="CHEBI:57783"/>
        <dbReference type="ChEBI" id="CHEBI:58349"/>
        <dbReference type="ChEBI" id="CHEBI:58476"/>
        <dbReference type="EC" id="1.1.1.86"/>
    </reaction>
</comment>
<comment type="catalytic activity">
    <reaction evidence="1">
        <text>(2R,3R)-2,3-dihydroxy-3-methylpentanoate + NADP(+) = (S)-2-ethyl-2-hydroxy-3-oxobutanoate + NADPH + H(+)</text>
        <dbReference type="Rhea" id="RHEA:13493"/>
        <dbReference type="ChEBI" id="CHEBI:15378"/>
        <dbReference type="ChEBI" id="CHEBI:49256"/>
        <dbReference type="ChEBI" id="CHEBI:49258"/>
        <dbReference type="ChEBI" id="CHEBI:57783"/>
        <dbReference type="ChEBI" id="CHEBI:58349"/>
        <dbReference type="EC" id="1.1.1.86"/>
    </reaction>
</comment>
<comment type="cofactor">
    <cofactor evidence="1">
        <name>Mg(2+)</name>
        <dbReference type="ChEBI" id="CHEBI:18420"/>
    </cofactor>
    <text evidence="1">Binds 2 magnesium ions per subunit.</text>
</comment>
<comment type="pathway">
    <text evidence="1">Amino-acid biosynthesis; L-isoleucine biosynthesis; L-isoleucine from 2-oxobutanoate: step 2/4.</text>
</comment>
<comment type="pathway">
    <text evidence="1">Amino-acid biosynthesis; L-valine biosynthesis; L-valine from pyruvate: step 2/4.</text>
</comment>
<comment type="similarity">
    <text evidence="1">Belongs to the ketol-acid reductoisomerase family.</text>
</comment>
<feature type="chain" id="PRO_0000226187" description="Ketol-acid reductoisomerase (NADP(+))">
    <location>
        <begin position="1"/>
        <end position="337"/>
    </location>
</feature>
<feature type="domain" description="KARI N-terminal Rossmann" evidence="2">
    <location>
        <begin position="1"/>
        <end position="180"/>
    </location>
</feature>
<feature type="domain" description="KARI C-terminal knotted" evidence="3">
    <location>
        <begin position="181"/>
        <end position="326"/>
    </location>
</feature>
<feature type="active site" evidence="1">
    <location>
        <position position="106"/>
    </location>
</feature>
<feature type="binding site" evidence="1">
    <location>
        <begin position="22"/>
        <end position="25"/>
    </location>
    <ligand>
        <name>NADP(+)</name>
        <dbReference type="ChEBI" id="CHEBI:58349"/>
    </ligand>
</feature>
<feature type="binding site" evidence="1">
    <location>
        <position position="46"/>
    </location>
    <ligand>
        <name>NADP(+)</name>
        <dbReference type="ChEBI" id="CHEBI:58349"/>
    </ligand>
</feature>
<feature type="binding site" evidence="1">
    <location>
        <position position="49"/>
    </location>
    <ligand>
        <name>NADP(+)</name>
        <dbReference type="ChEBI" id="CHEBI:58349"/>
    </ligand>
</feature>
<feature type="binding site" evidence="1">
    <location>
        <position position="51"/>
    </location>
    <ligand>
        <name>NADP(+)</name>
        <dbReference type="ChEBI" id="CHEBI:58349"/>
    </ligand>
</feature>
<feature type="binding site" evidence="1">
    <location>
        <begin position="81"/>
        <end position="84"/>
    </location>
    <ligand>
        <name>NADP(+)</name>
        <dbReference type="ChEBI" id="CHEBI:58349"/>
    </ligand>
</feature>
<feature type="binding site" evidence="1">
    <location>
        <position position="132"/>
    </location>
    <ligand>
        <name>NADP(+)</name>
        <dbReference type="ChEBI" id="CHEBI:58349"/>
    </ligand>
</feature>
<feature type="binding site" evidence="1">
    <location>
        <position position="189"/>
    </location>
    <ligand>
        <name>Mg(2+)</name>
        <dbReference type="ChEBI" id="CHEBI:18420"/>
        <label>1</label>
    </ligand>
</feature>
<feature type="binding site" evidence="1">
    <location>
        <position position="189"/>
    </location>
    <ligand>
        <name>Mg(2+)</name>
        <dbReference type="ChEBI" id="CHEBI:18420"/>
        <label>2</label>
    </ligand>
</feature>
<feature type="binding site" evidence="1">
    <location>
        <position position="193"/>
    </location>
    <ligand>
        <name>Mg(2+)</name>
        <dbReference type="ChEBI" id="CHEBI:18420"/>
        <label>1</label>
    </ligand>
</feature>
<feature type="binding site" evidence="1">
    <location>
        <position position="225"/>
    </location>
    <ligand>
        <name>Mg(2+)</name>
        <dbReference type="ChEBI" id="CHEBI:18420"/>
        <label>2</label>
    </ligand>
</feature>
<feature type="binding site" evidence="1">
    <location>
        <position position="229"/>
    </location>
    <ligand>
        <name>Mg(2+)</name>
        <dbReference type="ChEBI" id="CHEBI:18420"/>
        <label>2</label>
    </ligand>
</feature>
<feature type="binding site" evidence="1">
    <location>
        <position position="250"/>
    </location>
    <ligand>
        <name>substrate</name>
    </ligand>
</feature>
<evidence type="ECO:0000255" key="1">
    <source>
        <dbReference type="HAMAP-Rule" id="MF_00435"/>
    </source>
</evidence>
<evidence type="ECO:0000255" key="2">
    <source>
        <dbReference type="PROSITE-ProRule" id="PRU01197"/>
    </source>
</evidence>
<evidence type="ECO:0000255" key="3">
    <source>
        <dbReference type="PROSITE-ProRule" id="PRU01198"/>
    </source>
</evidence>
<gene>
    <name evidence="1" type="primary">ilvC</name>
    <name type="ordered locus">SAR11_0001</name>
</gene>